<accession>C3P746</accession>
<feature type="chain" id="PRO_1000187381" description="2-hydroxy-3-keto-5-methylthiopentenyl-1-phosphate phosphatase">
    <location>
        <begin position="1"/>
        <end position="219"/>
    </location>
</feature>
<keyword id="KW-0028">Amino-acid biosynthesis</keyword>
<keyword id="KW-0378">Hydrolase</keyword>
<keyword id="KW-0486">Methionine biosynthesis</keyword>
<organism>
    <name type="scientific">Bacillus anthracis (strain A0248)</name>
    <dbReference type="NCBI Taxonomy" id="592021"/>
    <lineage>
        <taxon>Bacteria</taxon>
        <taxon>Bacillati</taxon>
        <taxon>Bacillota</taxon>
        <taxon>Bacilli</taxon>
        <taxon>Bacillales</taxon>
        <taxon>Bacillaceae</taxon>
        <taxon>Bacillus</taxon>
        <taxon>Bacillus cereus group</taxon>
    </lineage>
</organism>
<name>MTNX_BACAA</name>
<dbReference type="EC" id="3.1.3.87" evidence="1"/>
<dbReference type="EMBL" id="CP001598">
    <property type="protein sequence ID" value="ACQ50439.1"/>
    <property type="molecule type" value="Genomic_DNA"/>
</dbReference>
<dbReference type="RefSeq" id="WP_000027476.1">
    <property type="nucleotide sequence ID" value="NC_012659.1"/>
</dbReference>
<dbReference type="SMR" id="C3P746"/>
<dbReference type="GeneID" id="45023927"/>
<dbReference type="KEGG" id="bai:BAA_4279"/>
<dbReference type="HOGENOM" id="CLU_058495_2_1_9"/>
<dbReference type="UniPathway" id="UPA00904">
    <property type="reaction ID" value="UER00877"/>
</dbReference>
<dbReference type="GO" id="GO:0043716">
    <property type="term" value="F:2-hydroxy-3-keto-5-methylthiopentenyl-1-phosphate phosphatase activity"/>
    <property type="evidence" value="ECO:0007669"/>
    <property type="project" value="UniProtKB-UniRule"/>
</dbReference>
<dbReference type="GO" id="GO:0019509">
    <property type="term" value="P:L-methionine salvage from methylthioadenosine"/>
    <property type="evidence" value="ECO:0007669"/>
    <property type="project" value="UniProtKB-UniRule"/>
</dbReference>
<dbReference type="CDD" id="cd07524">
    <property type="entry name" value="HAD_Pase"/>
    <property type="match status" value="1"/>
</dbReference>
<dbReference type="Gene3D" id="3.90.1470.20">
    <property type="match status" value="1"/>
</dbReference>
<dbReference type="Gene3D" id="3.40.50.1000">
    <property type="entry name" value="HAD superfamily/HAD-like"/>
    <property type="match status" value="1"/>
</dbReference>
<dbReference type="HAMAP" id="MF_01680">
    <property type="entry name" value="Salvage_MtnX"/>
    <property type="match status" value="1"/>
</dbReference>
<dbReference type="InterPro" id="IPR050849">
    <property type="entry name" value="HAD-like_hydrolase_phosphatase"/>
</dbReference>
<dbReference type="InterPro" id="IPR036412">
    <property type="entry name" value="HAD-like_sf"/>
</dbReference>
<dbReference type="InterPro" id="IPR017718">
    <property type="entry name" value="HAD-SF_hydro_IB_MtnX"/>
</dbReference>
<dbReference type="InterPro" id="IPR006384">
    <property type="entry name" value="HAD_hydro_PyrdxlP_Pase-like"/>
</dbReference>
<dbReference type="InterPro" id="IPR023214">
    <property type="entry name" value="HAD_sf"/>
</dbReference>
<dbReference type="NCBIfam" id="TIGR01489">
    <property type="entry name" value="DKMTPPase-SF"/>
    <property type="match status" value="1"/>
</dbReference>
<dbReference type="NCBIfam" id="TIGR01488">
    <property type="entry name" value="HAD-SF-IB"/>
    <property type="match status" value="1"/>
</dbReference>
<dbReference type="NCBIfam" id="NF007103">
    <property type="entry name" value="PRK09552.1"/>
    <property type="match status" value="1"/>
</dbReference>
<dbReference type="NCBIfam" id="TIGR03333">
    <property type="entry name" value="salvage_mtnX"/>
    <property type="match status" value="1"/>
</dbReference>
<dbReference type="PANTHER" id="PTHR28181:SF2">
    <property type="entry name" value="PHOSPHORIC MONOESTER HYDROLASE"/>
    <property type="match status" value="1"/>
</dbReference>
<dbReference type="PANTHER" id="PTHR28181">
    <property type="entry name" value="UPF0655 PROTEIN YCR015C"/>
    <property type="match status" value="1"/>
</dbReference>
<dbReference type="Pfam" id="PF12710">
    <property type="entry name" value="HAD"/>
    <property type="match status" value="1"/>
</dbReference>
<dbReference type="SUPFAM" id="SSF56784">
    <property type="entry name" value="HAD-like"/>
    <property type="match status" value="1"/>
</dbReference>
<proteinExistence type="inferred from homology"/>
<gene>
    <name evidence="1" type="primary">mtnX</name>
    <name type="ordered locus">BAA_4279</name>
</gene>
<sequence length="219" mass="25290">MSIQVFCDFDGTITNNDNIMSIMEKFAPPEAEEVKNRILSQELSIQEGVSQLFQLIPTNLHDEIIQFLIETAEIRNGFHEFIQFVNENNISFYVISGGMDFFVYPLLQGLIPKEQIYCNETDFSNEYITVNWPHPCDRLCQNHCGLCKSSLIRKLSDTNDFHIVIGDSITDLQAAKQADKVFARDFLITKCEENHISYTPFETFHDVKTELKHLLEVKL</sequence>
<evidence type="ECO:0000255" key="1">
    <source>
        <dbReference type="HAMAP-Rule" id="MF_01680"/>
    </source>
</evidence>
<protein>
    <recommendedName>
        <fullName evidence="1">2-hydroxy-3-keto-5-methylthiopentenyl-1-phosphate phosphatase</fullName>
        <shortName evidence="1">HK-MTPenyl-1-P phosphatase</shortName>
        <ecNumber evidence="1">3.1.3.87</ecNumber>
    </recommendedName>
</protein>
<reference key="1">
    <citation type="submission" date="2009-04" db="EMBL/GenBank/DDBJ databases">
        <title>Genome sequence of Bacillus anthracis A0248.</title>
        <authorList>
            <person name="Dodson R.J."/>
            <person name="Munk A.C."/>
            <person name="Bruce D."/>
            <person name="Detter C."/>
            <person name="Tapia R."/>
            <person name="Sutton G."/>
            <person name="Sims D."/>
            <person name="Brettin T."/>
        </authorList>
    </citation>
    <scope>NUCLEOTIDE SEQUENCE [LARGE SCALE GENOMIC DNA]</scope>
    <source>
        <strain>A0248</strain>
    </source>
</reference>
<comment type="function">
    <text evidence="1">Dephosphorylates 2-hydroxy-3-keto-5-methylthiopentenyl-1-phosphate (HK-MTPenyl-1-P) yielding 1,2-dihydroxy-3-keto-5-methylthiopentene (DHK-MTPene).</text>
</comment>
<comment type="catalytic activity">
    <reaction evidence="1">
        <text>2-hydroxy-5-methylsulfanyl-3-oxopent-1-enyl phosphate + H2O = 1,2-dihydroxy-5-(methylsulfanyl)pent-1-en-3-one + phosphate</text>
        <dbReference type="Rhea" id="RHEA:14481"/>
        <dbReference type="ChEBI" id="CHEBI:15377"/>
        <dbReference type="ChEBI" id="CHEBI:43474"/>
        <dbReference type="ChEBI" id="CHEBI:49252"/>
        <dbReference type="ChEBI" id="CHEBI:59505"/>
        <dbReference type="EC" id="3.1.3.87"/>
    </reaction>
</comment>
<comment type="pathway">
    <text evidence="1">Amino-acid biosynthesis; L-methionine biosynthesis via salvage pathway; L-methionine from S-methyl-5-thio-alpha-D-ribose 1-phosphate: step 4/6.</text>
</comment>
<comment type="similarity">
    <text evidence="1">Belongs to the HAD-like hydrolase superfamily. MtnX family.</text>
</comment>